<proteinExistence type="inferred from homology"/>
<gene>
    <name evidence="1" type="primary">iHog</name>
    <name type="ORF">GL25599</name>
</gene>
<reference evidence="7" key="1">
    <citation type="journal article" date="2007" name="Nature">
        <title>Evolution of genes and genomes on the Drosophila phylogeny.</title>
        <authorList>
            <consortium name="Drosophila 12 genomes consortium"/>
        </authorList>
    </citation>
    <scope>NUCLEOTIDE SEQUENCE [LARGE SCALE GENOMIC DNA]</scope>
    <source>
        <strain>MSH-3 / Tucson 14011-0111.49</strain>
    </source>
</reference>
<protein>
    <recommendedName>
        <fullName evidence="1">Interference hedgehog</fullName>
    </recommendedName>
</protein>
<keyword id="KW-1015">Disulfide bond</keyword>
<keyword id="KW-0325">Glycoprotein</keyword>
<keyword id="KW-0358">Heparin-binding</keyword>
<keyword id="KW-0393">Immunoglobulin domain</keyword>
<keyword id="KW-0472">Membrane</keyword>
<keyword id="KW-0654">Proteoglycan</keyword>
<keyword id="KW-1185">Reference proteome</keyword>
<keyword id="KW-0677">Repeat</keyword>
<keyword id="KW-0732">Signal</keyword>
<keyword id="KW-0812">Transmembrane</keyword>
<keyword id="KW-1133">Transmembrane helix</keyword>
<comment type="function">
    <text evidence="1">Mediates response to the active Hedgehog (Hh) protein signal in embryos, functioning upstream or at the level of patched (ptc).</text>
</comment>
<comment type="subunit">
    <text evidence="1">Homodimer. Heterotetramer; 2 iHog chains bind 2 hh chains when facilitated by heparin, heparin is required to promote high-affinity interactions between hh and iHog (By similarity).</text>
</comment>
<comment type="subcellular location">
    <subcellularLocation>
        <location evidence="2">Membrane</location>
        <topology evidence="1 2">Single-pass type I membrane protein</topology>
    </subcellularLocation>
</comment>
<comment type="domain">
    <text evidence="1">The first fibronectin type-III domain mediates a specific interaction with Hh protein, in vitro. The second fibronectin type-III domain is additionally required for in vivo signaling activity (By similarity).</text>
</comment>
<comment type="similarity">
    <text evidence="2 6">Belongs to the immunoglobulin superfamily. IHOG family.</text>
</comment>
<name>IHOG_DROPE</name>
<organism>
    <name type="scientific">Drosophila persimilis</name>
    <name type="common">Fruit fly</name>
    <dbReference type="NCBI Taxonomy" id="7234"/>
    <lineage>
        <taxon>Eukaryota</taxon>
        <taxon>Metazoa</taxon>
        <taxon>Ecdysozoa</taxon>
        <taxon>Arthropoda</taxon>
        <taxon>Hexapoda</taxon>
        <taxon>Insecta</taxon>
        <taxon>Pterygota</taxon>
        <taxon>Neoptera</taxon>
        <taxon>Endopterygota</taxon>
        <taxon>Diptera</taxon>
        <taxon>Brachycera</taxon>
        <taxon>Muscomorpha</taxon>
        <taxon>Ephydroidea</taxon>
        <taxon>Drosophilidae</taxon>
        <taxon>Drosophila</taxon>
        <taxon>Sophophora</taxon>
    </lineage>
</organism>
<sequence>MSPLTSSLLLFSLLTSSLEAIPVLQPSFPPSSPSPAPSPGVRILRAPESIVAPLGDEVVFECETSLQPEGFEWSYRRWPNAANSNGSVGASRFKYLKSGNGKLNVTQETAISRLRVLVRPDTVGEYRCIGWFGPLVVTSTTARLELANTSVKGRQETHLQWRVAPGNSVLWSCGQQVHSNPSASWSYYRNGVEIKPELAATNGNLFLTNVSTASAGKYTCLATNPASGARIEISSSMVLEVLSGRGSQNKAPHLLSGQPTSQAVTIREGSTLLLLCPGVGSPTPTAVWSSPDVVEAIHNKRTRVLNHGLEISNVQGHDTGTYICYLDNGVRPTLEHFINVTVEVPPRITRPPWADLTNEGERMQLECEATGVPAPELYWLLNGESSINDTEAEQLPNGYLVLHSVQKRHAGYVQCFARNRLGEQSAGTLLQVNPKQIQSEPRETGSGGGFGSHRSMKPVNHGQKPTKMIPPSPPNVTRLSDESVMLRWHVPRNDGLLILFFKVQYRMISEGKRKNWQTTNDNIPYGKPKWNSELGKSFTASVTDLKPQRTYRFRILAVYSNNDNKESNTSAKFYLQPGAALEPMPVPELLEIEEYSETAVVLHWRLDSDADEHLITGYYAYYRPSSSAGEYYKATIEGAHARSFQIATLEAATIYEFKLQSFSAVSASEFSALKQGRTQRPRASTTEEPTIQGIGDRDTTSHNQPSHNETVSMSPMLTGTIGGGALLLILLVSAFLCMCRRRSPRGRGQTQNKPRMAELREDFVPLGSCSPNKQRQRTRHIHITLNPLAQQQQQQLDEKNPPGLETDNDMAYFQRQPTYEYDPGLRRMSSSSLRRSQRTLERAGGANSGGNNGGNNNNLNQSSEAGTADGPCMQSSSKPGRVIMKRPRLSSRSENLSSGSLNSVGV</sequence>
<accession>B4GKZ8</accession>
<feature type="signal peptide" evidence="2">
    <location>
        <begin position="1"/>
        <end position="20"/>
    </location>
</feature>
<feature type="chain" id="PRO_0000383617" description="Interference hedgehog" evidence="2">
    <location>
        <begin position="21"/>
        <end position="906"/>
    </location>
</feature>
<feature type="topological domain" description="Extracellular" evidence="2">
    <location>
        <begin position="21"/>
        <end position="715"/>
    </location>
</feature>
<feature type="transmembrane region" description="Helical" evidence="2">
    <location>
        <begin position="716"/>
        <end position="736"/>
    </location>
</feature>
<feature type="topological domain" description="Cytoplasmic" evidence="2">
    <location>
        <begin position="737"/>
        <end position="906"/>
    </location>
</feature>
<feature type="domain" description="Ig-like C2-type 1" evidence="2">
    <location>
        <begin position="39"/>
        <end position="144"/>
    </location>
</feature>
<feature type="domain" description="Ig-like C2-type 2" evidence="2">
    <location>
        <begin position="134"/>
        <end position="236"/>
    </location>
</feature>
<feature type="domain" description="Ig-like C2-type 3" evidence="2">
    <location>
        <begin position="252"/>
        <end position="341"/>
    </location>
</feature>
<feature type="domain" description="Ig-like C2-type 4" evidence="2">
    <location>
        <begin position="346"/>
        <end position="433"/>
    </location>
</feature>
<feature type="domain" description="Fibronectin type-III 1" evidence="4">
    <location>
        <begin position="470"/>
        <end position="578"/>
    </location>
</feature>
<feature type="domain" description="Fibronectin type-III 2" evidence="4">
    <location>
        <begin position="586"/>
        <end position="681"/>
    </location>
</feature>
<feature type="region of interest" description="Disordered" evidence="5">
    <location>
        <begin position="427"/>
        <end position="476"/>
    </location>
</feature>
<feature type="region of interest" description="Disordered" evidence="5">
    <location>
        <begin position="673"/>
        <end position="713"/>
    </location>
</feature>
<feature type="region of interest" description="Disordered" evidence="5">
    <location>
        <begin position="789"/>
        <end position="906"/>
    </location>
</feature>
<feature type="compositionally biased region" description="Polar residues" evidence="5">
    <location>
        <begin position="427"/>
        <end position="439"/>
    </location>
</feature>
<feature type="compositionally biased region" description="Polar residues" evidence="5">
    <location>
        <begin position="676"/>
        <end position="689"/>
    </location>
</feature>
<feature type="compositionally biased region" description="Polar residues" evidence="5">
    <location>
        <begin position="701"/>
        <end position="713"/>
    </location>
</feature>
<feature type="compositionally biased region" description="Low complexity" evidence="5">
    <location>
        <begin position="854"/>
        <end position="866"/>
    </location>
</feature>
<feature type="compositionally biased region" description="Low complexity" evidence="5">
    <location>
        <begin position="890"/>
        <end position="906"/>
    </location>
</feature>
<feature type="binding site" evidence="1">
    <location>
        <position position="506"/>
    </location>
    <ligand>
        <name>heparin</name>
        <dbReference type="ChEBI" id="CHEBI:28304"/>
    </ligand>
</feature>
<feature type="binding site" evidence="1">
    <location>
        <position position="512"/>
    </location>
    <ligand>
        <name>heparin</name>
        <dbReference type="ChEBI" id="CHEBI:28304"/>
    </ligand>
</feature>
<feature type="binding site" evidence="1">
    <location>
        <position position="514"/>
    </location>
    <ligand>
        <name>heparin</name>
        <dbReference type="ChEBI" id="CHEBI:28304"/>
    </ligand>
</feature>
<feature type="binding site" evidence="1">
    <location>
        <position position="552"/>
    </location>
    <ligand>
        <name>heparin</name>
        <dbReference type="ChEBI" id="CHEBI:28304"/>
    </ligand>
</feature>
<feature type="glycosylation site" description="N-linked (GlcNAc...) asparagine" evidence="2">
    <location>
        <position position="85"/>
    </location>
</feature>
<feature type="glycosylation site" description="N-linked (GlcNAc...) asparagine" evidence="2">
    <location>
        <position position="104"/>
    </location>
</feature>
<feature type="glycosylation site" description="N-linked (GlcNAc...) asparagine" evidence="2">
    <location>
        <position position="148"/>
    </location>
</feature>
<feature type="glycosylation site" description="N-linked (GlcNAc...) asparagine" evidence="2">
    <location>
        <position position="209"/>
    </location>
</feature>
<feature type="glycosylation site" description="N-linked (GlcNAc...) asparagine" evidence="2">
    <location>
        <position position="339"/>
    </location>
</feature>
<feature type="glycosylation site" description="N-linked (GlcNAc...) asparagine" evidence="2">
    <location>
        <position position="388"/>
    </location>
</feature>
<feature type="glycosylation site" description="N-linked (GlcNAc...) asparagine" evidence="2">
    <location>
        <position position="475"/>
    </location>
</feature>
<feature type="glycosylation site" description="N-linked (GlcNAc...) asparagine" evidence="2">
    <location>
        <position position="568"/>
    </location>
</feature>
<feature type="disulfide bond" evidence="3">
    <location>
        <begin position="62"/>
        <end position="128"/>
    </location>
</feature>
<feature type="disulfide bond" evidence="3">
    <location>
        <begin position="173"/>
        <end position="220"/>
    </location>
</feature>
<feature type="disulfide bond" evidence="3">
    <location>
        <begin position="276"/>
        <end position="324"/>
    </location>
</feature>
<feature type="disulfide bond" evidence="3">
    <location>
        <begin position="367"/>
        <end position="415"/>
    </location>
</feature>
<evidence type="ECO:0000250" key="1">
    <source>
        <dbReference type="UniProtKB" id="Q9VM64"/>
    </source>
</evidence>
<evidence type="ECO:0000255" key="2"/>
<evidence type="ECO:0000255" key="3">
    <source>
        <dbReference type="PROSITE-ProRule" id="PRU00114"/>
    </source>
</evidence>
<evidence type="ECO:0000255" key="4">
    <source>
        <dbReference type="PROSITE-ProRule" id="PRU00316"/>
    </source>
</evidence>
<evidence type="ECO:0000256" key="5">
    <source>
        <dbReference type="SAM" id="MobiDB-lite"/>
    </source>
</evidence>
<evidence type="ECO:0000305" key="6"/>
<evidence type="ECO:0000312" key="7">
    <source>
        <dbReference type="EMBL" id="EDW37314.1"/>
    </source>
</evidence>
<dbReference type="EMBL" id="CH479184">
    <property type="protein sequence ID" value="EDW37314.1"/>
    <property type="molecule type" value="Genomic_DNA"/>
</dbReference>
<dbReference type="SMR" id="B4GKZ8"/>
<dbReference type="STRING" id="7234.B4GKZ8"/>
<dbReference type="GlyCosmos" id="B4GKZ8">
    <property type="glycosylation" value="8 sites, No reported glycans"/>
</dbReference>
<dbReference type="EnsemblMetazoa" id="FBtr0191214">
    <property type="protein sequence ID" value="FBpp0189706"/>
    <property type="gene ID" value="FBgn0163183"/>
</dbReference>
<dbReference type="EnsemblMetazoa" id="XM_002019082.2">
    <property type="protein sequence ID" value="XP_002019118.1"/>
    <property type="gene ID" value="LOC6593433"/>
</dbReference>
<dbReference type="GeneID" id="6593433"/>
<dbReference type="KEGG" id="dpe:6593433"/>
<dbReference type="eggNOG" id="ENOG502QSGM">
    <property type="taxonomic scope" value="Eukaryota"/>
</dbReference>
<dbReference type="HOGENOM" id="CLU_004633_1_0_1"/>
<dbReference type="OMA" id="CGLMEGK"/>
<dbReference type="OrthoDB" id="9998697at2759"/>
<dbReference type="PhylomeDB" id="B4GKZ8"/>
<dbReference type="Proteomes" id="UP000008744">
    <property type="component" value="Unassembled WGS sequence"/>
</dbReference>
<dbReference type="GO" id="GO:0030424">
    <property type="term" value="C:axon"/>
    <property type="evidence" value="ECO:0007669"/>
    <property type="project" value="TreeGrafter"/>
</dbReference>
<dbReference type="GO" id="GO:0009986">
    <property type="term" value="C:cell surface"/>
    <property type="evidence" value="ECO:0007669"/>
    <property type="project" value="EnsemblMetazoa"/>
</dbReference>
<dbReference type="GO" id="GO:0035230">
    <property type="term" value="C:cytoneme"/>
    <property type="evidence" value="ECO:0007669"/>
    <property type="project" value="EnsemblMetazoa"/>
</dbReference>
<dbReference type="GO" id="GO:0016020">
    <property type="term" value="C:membrane"/>
    <property type="evidence" value="ECO:0000250"/>
    <property type="project" value="UniProtKB"/>
</dbReference>
<dbReference type="GO" id="GO:0005886">
    <property type="term" value="C:plasma membrane"/>
    <property type="evidence" value="ECO:0007669"/>
    <property type="project" value="EnsemblMetazoa"/>
</dbReference>
<dbReference type="GO" id="GO:0015026">
    <property type="term" value="F:coreceptor activity"/>
    <property type="evidence" value="ECO:0007669"/>
    <property type="project" value="EnsemblMetazoa"/>
</dbReference>
<dbReference type="GO" id="GO:0097108">
    <property type="term" value="F:hedgehog family protein binding"/>
    <property type="evidence" value="ECO:0007669"/>
    <property type="project" value="EnsemblMetazoa"/>
</dbReference>
<dbReference type="GO" id="GO:0008201">
    <property type="term" value="F:heparin binding"/>
    <property type="evidence" value="ECO:0000250"/>
    <property type="project" value="UniProtKB"/>
</dbReference>
<dbReference type="GO" id="GO:0005113">
    <property type="term" value="F:patched binding"/>
    <property type="evidence" value="ECO:0007669"/>
    <property type="project" value="EnsemblMetazoa"/>
</dbReference>
<dbReference type="GO" id="GO:0042803">
    <property type="term" value="F:protein homodimerization activity"/>
    <property type="evidence" value="ECO:0000250"/>
    <property type="project" value="UniProtKB"/>
</dbReference>
<dbReference type="GO" id="GO:0007411">
    <property type="term" value="P:axon guidance"/>
    <property type="evidence" value="ECO:0007669"/>
    <property type="project" value="TreeGrafter"/>
</dbReference>
<dbReference type="GO" id="GO:0048749">
    <property type="term" value="P:compound eye development"/>
    <property type="evidence" value="ECO:0007669"/>
    <property type="project" value="EnsemblMetazoa"/>
</dbReference>
<dbReference type="GO" id="GO:0035017">
    <property type="term" value="P:cuticle pattern formation"/>
    <property type="evidence" value="ECO:0007669"/>
    <property type="project" value="EnsemblMetazoa"/>
</dbReference>
<dbReference type="GO" id="GO:0034109">
    <property type="term" value="P:homotypic cell-cell adhesion"/>
    <property type="evidence" value="ECO:0007669"/>
    <property type="project" value="EnsemblMetazoa"/>
</dbReference>
<dbReference type="GO" id="GO:0071694">
    <property type="term" value="P:maintenance of protein location in extracellular region"/>
    <property type="evidence" value="ECO:0007669"/>
    <property type="project" value="EnsemblMetazoa"/>
</dbReference>
<dbReference type="GO" id="GO:0007379">
    <property type="term" value="P:segment specification"/>
    <property type="evidence" value="ECO:0007669"/>
    <property type="project" value="EnsemblMetazoa"/>
</dbReference>
<dbReference type="GO" id="GO:0007224">
    <property type="term" value="P:smoothened signaling pathway"/>
    <property type="evidence" value="ECO:0000250"/>
    <property type="project" value="UniProtKB"/>
</dbReference>
<dbReference type="GO" id="GO:0048100">
    <property type="term" value="P:wing disc anterior/posterior pattern formation"/>
    <property type="evidence" value="ECO:0007669"/>
    <property type="project" value="EnsemblMetazoa"/>
</dbReference>
<dbReference type="CDD" id="cd00063">
    <property type="entry name" value="FN3"/>
    <property type="match status" value="2"/>
</dbReference>
<dbReference type="FunFam" id="2.60.40.10:FF:001723">
    <property type="entry name" value="Interference hedgehog"/>
    <property type="match status" value="1"/>
</dbReference>
<dbReference type="FunFam" id="2.60.40.10:FF:001747">
    <property type="entry name" value="Interference hedgehog"/>
    <property type="match status" value="1"/>
</dbReference>
<dbReference type="FunFam" id="2.60.40.10:FF:001773">
    <property type="entry name" value="Interference hedgehog"/>
    <property type="match status" value="1"/>
</dbReference>
<dbReference type="FunFam" id="2.60.40.10:FF:002071">
    <property type="entry name" value="Interference hedgehog"/>
    <property type="match status" value="1"/>
</dbReference>
<dbReference type="FunFam" id="2.60.40.10:FF:002212">
    <property type="entry name" value="Interference hedgehog"/>
    <property type="match status" value="1"/>
</dbReference>
<dbReference type="Gene3D" id="2.60.40.10">
    <property type="entry name" value="Immunoglobulins"/>
    <property type="match status" value="5"/>
</dbReference>
<dbReference type="InterPro" id="IPR003961">
    <property type="entry name" value="FN3_dom"/>
</dbReference>
<dbReference type="InterPro" id="IPR036116">
    <property type="entry name" value="FN3_sf"/>
</dbReference>
<dbReference type="InterPro" id="IPR007110">
    <property type="entry name" value="Ig-like_dom"/>
</dbReference>
<dbReference type="InterPro" id="IPR036179">
    <property type="entry name" value="Ig-like_dom_sf"/>
</dbReference>
<dbReference type="InterPro" id="IPR013783">
    <property type="entry name" value="Ig-like_fold"/>
</dbReference>
<dbReference type="InterPro" id="IPR003599">
    <property type="entry name" value="Ig_sub"/>
</dbReference>
<dbReference type="InterPro" id="IPR003598">
    <property type="entry name" value="Ig_sub2"/>
</dbReference>
<dbReference type="PANTHER" id="PTHR44170:SF33">
    <property type="entry name" value="BROTHER OF IHOG, ISOFORM G-RELATED"/>
    <property type="match status" value="1"/>
</dbReference>
<dbReference type="PANTHER" id="PTHR44170">
    <property type="entry name" value="PROTEIN SIDEKICK"/>
    <property type="match status" value="1"/>
</dbReference>
<dbReference type="Pfam" id="PF00041">
    <property type="entry name" value="fn3"/>
    <property type="match status" value="2"/>
</dbReference>
<dbReference type="Pfam" id="PF13895">
    <property type="entry name" value="Ig_2"/>
    <property type="match status" value="1"/>
</dbReference>
<dbReference type="Pfam" id="PF13927">
    <property type="entry name" value="Ig_3"/>
    <property type="match status" value="2"/>
</dbReference>
<dbReference type="SMART" id="SM00060">
    <property type="entry name" value="FN3"/>
    <property type="match status" value="2"/>
</dbReference>
<dbReference type="SMART" id="SM00409">
    <property type="entry name" value="IG"/>
    <property type="match status" value="4"/>
</dbReference>
<dbReference type="SMART" id="SM00408">
    <property type="entry name" value="IGc2"/>
    <property type="match status" value="3"/>
</dbReference>
<dbReference type="SUPFAM" id="SSF49265">
    <property type="entry name" value="Fibronectin type III"/>
    <property type="match status" value="1"/>
</dbReference>
<dbReference type="SUPFAM" id="SSF48726">
    <property type="entry name" value="Immunoglobulin"/>
    <property type="match status" value="3"/>
</dbReference>
<dbReference type="PROSITE" id="PS50853">
    <property type="entry name" value="FN3"/>
    <property type="match status" value="2"/>
</dbReference>
<dbReference type="PROSITE" id="PS50835">
    <property type="entry name" value="IG_LIKE"/>
    <property type="match status" value="4"/>
</dbReference>